<protein>
    <recommendedName>
        <fullName evidence="1">Putative glutamate--cysteine ligase 2-2</fullName>
        <ecNumber evidence="1">6.3.2.2</ecNumber>
    </recommendedName>
    <alternativeName>
        <fullName evidence="1">Gamma-glutamylcysteine synthetase 2-2</fullName>
        <shortName evidence="1">GCS 2-2</shortName>
        <shortName evidence="1">Gamma-GCS 2-2</shortName>
    </alternativeName>
</protein>
<accession>A4FHB5</accession>
<dbReference type="EC" id="6.3.2.2" evidence="1"/>
<dbReference type="EMBL" id="AM420293">
    <property type="protein sequence ID" value="CAM03440.1"/>
    <property type="molecule type" value="Genomic_DNA"/>
</dbReference>
<dbReference type="RefSeq" id="WP_009946756.1">
    <property type="nucleotide sequence ID" value="NC_009142.1"/>
</dbReference>
<dbReference type="SMR" id="A4FHB5"/>
<dbReference type="STRING" id="405948.SACE_4171"/>
<dbReference type="KEGG" id="sen:SACE_4171"/>
<dbReference type="eggNOG" id="COG2170">
    <property type="taxonomic scope" value="Bacteria"/>
</dbReference>
<dbReference type="HOGENOM" id="CLU_044848_0_0_11"/>
<dbReference type="OrthoDB" id="9803842at2"/>
<dbReference type="Proteomes" id="UP000006728">
    <property type="component" value="Chromosome"/>
</dbReference>
<dbReference type="GO" id="GO:0005524">
    <property type="term" value="F:ATP binding"/>
    <property type="evidence" value="ECO:0007669"/>
    <property type="project" value="UniProtKB-KW"/>
</dbReference>
<dbReference type="GO" id="GO:0004357">
    <property type="term" value="F:glutamate-cysteine ligase activity"/>
    <property type="evidence" value="ECO:0007669"/>
    <property type="project" value="UniProtKB-EC"/>
</dbReference>
<dbReference type="GO" id="GO:0042398">
    <property type="term" value="P:modified amino acid biosynthetic process"/>
    <property type="evidence" value="ECO:0007669"/>
    <property type="project" value="InterPro"/>
</dbReference>
<dbReference type="Gene3D" id="3.30.590.20">
    <property type="match status" value="1"/>
</dbReference>
<dbReference type="HAMAP" id="MF_01609">
    <property type="entry name" value="Glu_cys_ligase_2"/>
    <property type="match status" value="1"/>
</dbReference>
<dbReference type="InterPro" id="IPR050141">
    <property type="entry name" value="GCL_type2/YbdK_subfam"/>
</dbReference>
<dbReference type="InterPro" id="IPR006336">
    <property type="entry name" value="GCS2"/>
</dbReference>
<dbReference type="InterPro" id="IPR014746">
    <property type="entry name" value="Gln_synth/guanido_kin_cat_dom"/>
</dbReference>
<dbReference type="InterPro" id="IPR011793">
    <property type="entry name" value="YbdK"/>
</dbReference>
<dbReference type="NCBIfam" id="TIGR02050">
    <property type="entry name" value="gshA_cyan_rel"/>
    <property type="match status" value="1"/>
</dbReference>
<dbReference type="NCBIfam" id="NF010041">
    <property type="entry name" value="PRK13517.1-1"/>
    <property type="match status" value="1"/>
</dbReference>
<dbReference type="PANTHER" id="PTHR36510">
    <property type="entry name" value="GLUTAMATE--CYSTEINE LIGASE 2-RELATED"/>
    <property type="match status" value="1"/>
</dbReference>
<dbReference type="PANTHER" id="PTHR36510:SF1">
    <property type="entry name" value="GLUTAMATE--CYSTEINE LIGASE 2-RELATED"/>
    <property type="match status" value="1"/>
</dbReference>
<dbReference type="Pfam" id="PF04107">
    <property type="entry name" value="GCS2"/>
    <property type="match status" value="1"/>
</dbReference>
<dbReference type="SUPFAM" id="SSF55931">
    <property type="entry name" value="Glutamine synthetase/guanido kinase"/>
    <property type="match status" value="1"/>
</dbReference>
<evidence type="ECO:0000255" key="1">
    <source>
        <dbReference type="HAMAP-Rule" id="MF_01609"/>
    </source>
</evidence>
<proteinExistence type="inferred from homology"/>
<name>GCS22_SACEN</name>
<comment type="function">
    <text evidence="1">ATP-dependent carboxylate-amine ligase which exhibits weak glutamate--cysteine ligase activity.</text>
</comment>
<comment type="catalytic activity">
    <reaction evidence="1">
        <text>L-cysteine + L-glutamate + ATP = gamma-L-glutamyl-L-cysteine + ADP + phosphate + H(+)</text>
        <dbReference type="Rhea" id="RHEA:13285"/>
        <dbReference type="ChEBI" id="CHEBI:15378"/>
        <dbReference type="ChEBI" id="CHEBI:29985"/>
        <dbReference type="ChEBI" id="CHEBI:30616"/>
        <dbReference type="ChEBI" id="CHEBI:35235"/>
        <dbReference type="ChEBI" id="CHEBI:43474"/>
        <dbReference type="ChEBI" id="CHEBI:58173"/>
        <dbReference type="ChEBI" id="CHEBI:456216"/>
        <dbReference type="EC" id="6.3.2.2"/>
    </reaction>
</comment>
<comment type="similarity">
    <text evidence="1">Belongs to the glutamate--cysteine ligase type 2 family. YbdK subfamily.</text>
</comment>
<reference key="1">
    <citation type="journal article" date="2007" name="Nat. Biotechnol.">
        <title>Complete genome sequence of the erythromycin-producing bacterium Saccharopolyspora erythraea NRRL23338.</title>
        <authorList>
            <person name="Oliynyk M."/>
            <person name="Samborskyy M."/>
            <person name="Lester J.B."/>
            <person name="Mironenko T."/>
            <person name="Scott N."/>
            <person name="Dickens S."/>
            <person name="Haydock S.F."/>
            <person name="Leadlay P.F."/>
        </authorList>
    </citation>
    <scope>NUCLEOTIDE SEQUENCE [LARGE SCALE GENOMIC DNA]</scope>
    <source>
        <strain>ATCC 11635 / DSM 40517 / JCM 4748 / NBRC 13426 / NCIMB 8594 / NRRL 2338</strain>
    </source>
</reference>
<feature type="chain" id="PRO_0000291515" description="Putative glutamate--cysteine ligase 2-2">
    <location>
        <begin position="1"/>
        <end position="391"/>
    </location>
</feature>
<organism>
    <name type="scientific">Saccharopolyspora erythraea (strain ATCC 11635 / DSM 40517 / JCM 4748 / NBRC 13426 / NCIMB 8594 / NRRL 2338)</name>
    <dbReference type="NCBI Taxonomy" id="405948"/>
    <lineage>
        <taxon>Bacteria</taxon>
        <taxon>Bacillati</taxon>
        <taxon>Actinomycetota</taxon>
        <taxon>Actinomycetes</taxon>
        <taxon>Pseudonocardiales</taxon>
        <taxon>Pseudonocardiaceae</taxon>
        <taxon>Saccharopolyspora</taxon>
    </lineage>
</organism>
<sequence>MGLQEHPVTPAERQPPVRGGVTIGVEEEFLLVDAASGQLAPHAEAVLAEAANGPLGAPDAVLHAEMLNSQVEAATGCCRTLEELRSQLVAARTSLDRAASVAGARIVSSGTPVLAVEGTGTSNGQRFADIAERYRAVASDYHVCGCHVHVGVPDRDTAVAVVNHLRPWLPTLLAISANSPFHLGHDTGHASWRGVQQRLYPGSGVPPHFPSRDAYDREVARLVDCGALVDDRMSFWMARPSPHLPTVELRVADALITAEETVLQAALSRALVRAALDDLAAGREGDEVSDQVAAAAVWNASRYGLRGPAVDPVPARRVPALEMVERLLRRVGPALEQTGDSALVREALAHVTGVGTGSERQRAAAAAGGPREVVAMLAAATAPGRADRLRT</sequence>
<keyword id="KW-0067">ATP-binding</keyword>
<keyword id="KW-0436">Ligase</keyword>
<keyword id="KW-0547">Nucleotide-binding</keyword>
<keyword id="KW-1185">Reference proteome</keyword>
<gene>
    <name type="ordered locus">SACE_4171</name>
</gene>